<dbReference type="EC" id="5.3.3.5"/>
<dbReference type="EMBL" id="AF030357">
    <property type="protein sequence ID" value="AAD03489.1"/>
    <property type="molecule type" value="mRNA"/>
</dbReference>
<dbReference type="EMBL" id="U81498">
    <property type="protein sequence ID" value="AAD04752.1"/>
    <property type="molecule type" value="mRNA"/>
</dbReference>
<dbReference type="EMBL" id="AC022472">
    <property type="protein sequence ID" value="AAF79909.1"/>
    <property type="molecule type" value="Genomic_DNA"/>
</dbReference>
<dbReference type="EMBL" id="CP002684">
    <property type="protein sequence ID" value="AEE29928.1"/>
    <property type="molecule type" value="Genomic_DNA"/>
</dbReference>
<dbReference type="EMBL" id="AF334733">
    <property type="protein sequence ID" value="AAG50111.1"/>
    <property type="molecule type" value="mRNA"/>
</dbReference>
<dbReference type="PIR" id="T51727">
    <property type="entry name" value="T51727"/>
</dbReference>
<dbReference type="SMR" id="O48962"/>
<dbReference type="BioGRID" id="23832">
    <property type="interactions" value="3"/>
</dbReference>
<dbReference type="FunCoup" id="O48962">
    <property type="interactions" value="2016"/>
</dbReference>
<dbReference type="STRING" id="3702.O48962"/>
<dbReference type="iPTMnet" id="O48962"/>
<dbReference type="PaxDb" id="3702-AT1G20050.1"/>
<dbReference type="ProteomicsDB" id="222045"/>
<dbReference type="EnsemblPlants" id="AT1G20050.1">
    <property type="protein sequence ID" value="AT1G20050.1"/>
    <property type="gene ID" value="AT1G20050"/>
</dbReference>
<dbReference type="Gramene" id="AT1G20050.1">
    <property type="protein sequence ID" value="AT1G20050.1"/>
    <property type="gene ID" value="AT1G20050"/>
</dbReference>
<dbReference type="KEGG" id="ath:AT1G20050"/>
<dbReference type="Araport" id="AT1G20050"/>
<dbReference type="TAIR" id="AT1G20050">
    <property type="gene designation" value="HYD1"/>
</dbReference>
<dbReference type="eggNOG" id="KOG4826">
    <property type="taxonomic scope" value="Eukaryota"/>
</dbReference>
<dbReference type="HOGENOM" id="CLU_072128_2_0_1"/>
<dbReference type="InParanoid" id="O48962"/>
<dbReference type="OMA" id="VIEGWFC"/>
<dbReference type="PhylomeDB" id="O48962"/>
<dbReference type="BioCyc" id="ARA:AT1G20050-MONOMER"/>
<dbReference type="BioCyc" id="MetaCyc:AT1G20050-MONOMER"/>
<dbReference type="UniPathway" id="UPA00766"/>
<dbReference type="PRO" id="PR:O48962"/>
<dbReference type="Proteomes" id="UP000006548">
    <property type="component" value="Chromosome 1"/>
</dbReference>
<dbReference type="ExpressionAtlas" id="O48962">
    <property type="expression patterns" value="baseline and differential"/>
</dbReference>
<dbReference type="GO" id="GO:0005789">
    <property type="term" value="C:endoplasmic reticulum membrane"/>
    <property type="evidence" value="ECO:0007669"/>
    <property type="project" value="UniProtKB-SubCell"/>
</dbReference>
<dbReference type="GO" id="GO:0005634">
    <property type="term" value="C:nucleus"/>
    <property type="evidence" value="ECO:0007005"/>
    <property type="project" value="TAIR"/>
</dbReference>
<dbReference type="GO" id="GO:0000247">
    <property type="term" value="F:C-8 sterol isomerase activity"/>
    <property type="evidence" value="ECO:0000315"/>
    <property type="project" value="TAIR"/>
</dbReference>
<dbReference type="GO" id="GO:0047750">
    <property type="term" value="F:cholestenol delta-isomerase activity"/>
    <property type="evidence" value="ECO:0007669"/>
    <property type="project" value="UniProtKB-EC"/>
</dbReference>
<dbReference type="GO" id="GO:0016126">
    <property type="term" value="P:sterol biosynthetic process"/>
    <property type="evidence" value="ECO:0000304"/>
    <property type="project" value="TAIR"/>
</dbReference>
<dbReference type="InterPro" id="IPR007905">
    <property type="entry name" value="EBP"/>
</dbReference>
<dbReference type="InterPro" id="IPR033118">
    <property type="entry name" value="EXPERA"/>
</dbReference>
<dbReference type="PANTHER" id="PTHR14207:SF0">
    <property type="entry name" value="3-BETA-HYDROXYSTEROID-DELTA(8),DELTA(7)-ISOMERASE"/>
    <property type="match status" value="1"/>
</dbReference>
<dbReference type="PANTHER" id="PTHR14207">
    <property type="entry name" value="STEROL ISOMERASE"/>
    <property type="match status" value="1"/>
</dbReference>
<dbReference type="Pfam" id="PF05241">
    <property type="entry name" value="EBP"/>
    <property type="match status" value="1"/>
</dbReference>
<dbReference type="PROSITE" id="PS51751">
    <property type="entry name" value="EXPERA"/>
    <property type="match status" value="1"/>
</dbReference>
<evidence type="ECO:0000250" key="1"/>
<evidence type="ECO:0000255" key="2"/>
<evidence type="ECO:0000255" key="3">
    <source>
        <dbReference type="PROSITE-ProRule" id="PRU01087"/>
    </source>
</evidence>
<evidence type="ECO:0000305" key="4"/>
<gene>
    <name type="ordered locus">At1g20050</name>
    <name type="ORF">T20H2.18</name>
</gene>
<feature type="chain" id="PRO_0000174345" description="Probable 3-beta-hydroxysteroid-Delta(8),Delta(7)-isomerase">
    <location>
        <begin position="1"/>
        <end position="223"/>
    </location>
</feature>
<feature type="transmembrane region" description="Helical" evidence="2">
    <location>
        <begin position="28"/>
        <end position="48"/>
    </location>
</feature>
<feature type="transmembrane region" description="Helical" evidence="2">
    <location>
        <begin position="58"/>
        <end position="78"/>
    </location>
</feature>
<feature type="transmembrane region" description="Helical" evidence="2">
    <location>
        <begin position="115"/>
        <end position="135"/>
    </location>
</feature>
<feature type="transmembrane region" description="Helical" evidence="2">
    <location>
        <begin position="175"/>
        <end position="195"/>
    </location>
</feature>
<feature type="domain" description="EXPERA" evidence="3">
    <location>
        <begin position="54"/>
        <end position="196"/>
    </location>
</feature>
<feature type="sequence conflict" description="In Ref. 2; AAD04752." evidence="4" ref="2">
    <original>L</original>
    <variation>V</variation>
    <location>
        <position position="157"/>
    </location>
</feature>
<sequence length="223" mass="25146">MEELAHPYVPRDLNLPGYVPISMSMSSIVSIYLGSSLLVVSLVWLLFGRKKAKLDKLLMCWWTFTGLTHVILEGYFVFSPEFFKDNTSAYLAEVWKEYSKGDSRYVGRDSAVVSVEGITAVIVGPASLLAIYAIAKEKSYSYVLQLAISVCQLYGCLVYFITAILEGDNFATNSFYYYSYYIGANCWWVLIPSLISFRCWKKICAAAAIANNNVETKTKKKTR</sequence>
<keyword id="KW-0256">Endoplasmic reticulum</keyword>
<keyword id="KW-0413">Isomerase</keyword>
<keyword id="KW-0444">Lipid biosynthesis</keyword>
<keyword id="KW-0443">Lipid metabolism</keyword>
<keyword id="KW-0472">Membrane</keyword>
<keyword id="KW-1185">Reference proteome</keyword>
<keyword id="KW-0752">Steroid biosynthesis</keyword>
<keyword id="KW-0753">Steroid metabolism</keyword>
<keyword id="KW-0756">Sterol biosynthesis</keyword>
<keyword id="KW-1207">Sterol metabolism</keyword>
<keyword id="KW-0812">Transmembrane</keyword>
<keyword id="KW-1133">Transmembrane helix</keyword>
<accession>O48962</accession>
<accession>Q9SAQ8</accession>
<reference key="1">
    <citation type="journal article" date="1998" name="Plant Mol. Biol.">
        <title>Isolation and characterization of an Arabidopsis thaliana C-8,7 sterol isomerase: functional and structural similarities to mammalian C-8,7 sterol isomerase/emopamil-binding protein.</title>
        <authorList>
            <person name="Grebenok R.J."/>
            <person name="Ohnmeiss T.E."/>
            <person name="Yamamoto A."/>
            <person name="Huntley E.D."/>
            <person name="Galbraith D.W."/>
            <person name="Della Penna D."/>
        </authorList>
    </citation>
    <scope>NUCLEOTIDE SEQUENCE [MRNA]</scope>
</reference>
<reference key="2">
    <citation type="submission" date="1996-12" db="EMBL/GenBank/DDBJ databases">
        <authorList>
            <person name="Benveniste P."/>
        </authorList>
    </citation>
    <scope>NUCLEOTIDE SEQUENCE [MRNA]</scope>
    <source>
        <strain>cv. Columbia</strain>
    </source>
</reference>
<reference key="3">
    <citation type="journal article" date="2000" name="Nature">
        <title>Sequence and analysis of chromosome 1 of the plant Arabidopsis thaliana.</title>
        <authorList>
            <person name="Theologis A."/>
            <person name="Ecker J.R."/>
            <person name="Palm C.J."/>
            <person name="Federspiel N.A."/>
            <person name="Kaul S."/>
            <person name="White O."/>
            <person name="Alonso J."/>
            <person name="Altafi H."/>
            <person name="Araujo R."/>
            <person name="Bowman C.L."/>
            <person name="Brooks S.Y."/>
            <person name="Buehler E."/>
            <person name="Chan A."/>
            <person name="Chao Q."/>
            <person name="Chen H."/>
            <person name="Cheuk R.F."/>
            <person name="Chin C.W."/>
            <person name="Chung M.K."/>
            <person name="Conn L."/>
            <person name="Conway A.B."/>
            <person name="Conway A.R."/>
            <person name="Creasy T.H."/>
            <person name="Dewar K."/>
            <person name="Dunn P."/>
            <person name="Etgu P."/>
            <person name="Feldblyum T.V."/>
            <person name="Feng J.-D."/>
            <person name="Fong B."/>
            <person name="Fujii C.Y."/>
            <person name="Gill J.E."/>
            <person name="Goldsmith A.D."/>
            <person name="Haas B."/>
            <person name="Hansen N.F."/>
            <person name="Hughes B."/>
            <person name="Huizar L."/>
            <person name="Hunter J.L."/>
            <person name="Jenkins J."/>
            <person name="Johnson-Hopson C."/>
            <person name="Khan S."/>
            <person name="Khaykin E."/>
            <person name="Kim C.J."/>
            <person name="Koo H.L."/>
            <person name="Kremenetskaia I."/>
            <person name="Kurtz D.B."/>
            <person name="Kwan A."/>
            <person name="Lam B."/>
            <person name="Langin-Hooper S."/>
            <person name="Lee A."/>
            <person name="Lee J.M."/>
            <person name="Lenz C.A."/>
            <person name="Li J.H."/>
            <person name="Li Y.-P."/>
            <person name="Lin X."/>
            <person name="Liu S.X."/>
            <person name="Liu Z.A."/>
            <person name="Luros J.S."/>
            <person name="Maiti R."/>
            <person name="Marziali A."/>
            <person name="Militscher J."/>
            <person name="Miranda M."/>
            <person name="Nguyen M."/>
            <person name="Nierman W.C."/>
            <person name="Osborne B.I."/>
            <person name="Pai G."/>
            <person name="Peterson J."/>
            <person name="Pham P.K."/>
            <person name="Rizzo M."/>
            <person name="Rooney T."/>
            <person name="Rowley D."/>
            <person name="Sakano H."/>
            <person name="Salzberg S.L."/>
            <person name="Schwartz J.R."/>
            <person name="Shinn P."/>
            <person name="Southwick A.M."/>
            <person name="Sun H."/>
            <person name="Tallon L.J."/>
            <person name="Tambunga G."/>
            <person name="Toriumi M.J."/>
            <person name="Town C.D."/>
            <person name="Utterback T."/>
            <person name="Van Aken S."/>
            <person name="Vaysberg M."/>
            <person name="Vysotskaia V.S."/>
            <person name="Walker M."/>
            <person name="Wu D."/>
            <person name="Yu G."/>
            <person name="Fraser C.M."/>
            <person name="Venter J.C."/>
            <person name="Davis R.W."/>
        </authorList>
    </citation>
    <scope>NUCLEOTIDE SEQUENCE [LARGE SCALE GENOMIC DNA]</scope>
    <source>
        <strain>cv. Columbia</strain>
    </source>
</reference>
<reference key="4">
    <citation type="journal article" date="2017" name="Plant J.">
        <title>Araport11: a complete reannotation of the Arabidopsis thaliana reference genome.</title>
        <authorList>
            <person name="Cheng C.Y."/>
            <person name="Krishnakumar V."/>
            <person name="Chan A.P."/>
            <person name="Thibaud-Nissen F."/>
            <person name="Schobel S."/>
            <person name="Town C.D."/>
        </authorList>
    </citation>
    <scope>GENOME REANNOTATION</scope>
    <source>
        <strain>cv. Columbia</strain>
    </source>
</reference>
<reference key="5">
    <citation type="journal article" date="2003" name="Science">
        <title>Empirical analysis of transcriptional activity in the Arabidopsis genome.</title>
        <authorList>
            <person name="Yamada K."/>
            <person name="Lim J."/>
            <person name="Dale J.M."/>
            <person name="Chen H."/>
            <person name="Shinn P."/>
            <person name="Palm C.J."/>
            <person name="Southwick A.M."/>
            <person name="Wu H.C."/>
            <person name="Kim C.J."/>
            <person name="Nguyen M."/>
            <person name="Pham P.K."/>
            <person name="Cheuk R.F."/>
            <person name="Karlin-Newmann G."/>
            <person name="Liu S.X."/>
            <person name="Lam B."/>
            <person name="Sakano H."/>
            <person name="Wu T."/>
            <person name="Yu G."/>
            <person name="Miranda M."/>
            <person name="Quach H.L."/>
            <person name="Tripp M."/>
            <person name="Chang C.H."/>
            <person name="Lee J.M."/>
            <person name="Toriumi M.J."/>
            <person name="Chan M.M."/>
            <person name="Tang C.C."/>
            <person name="Onodera C.S."/>
            <person name="Deng J.M."/>
            <person name="Akiyama K."/>
            <person name="Ansari Y."/>
            <person name="Arakawa T."/>
            <person name="Banh J."/>
            <person name="Banno F."/>
            <person name="Bowser L."/>
            <person name="Brooks S.Y."/>
            <person name="Carninci P."/>
            <person name="Chao Q."/>
            <person name="Choy N."/>
            <person name="Enju A."/>
            <person name="Goldsmith A.D."/>
            <person name="Gurjal M."/>
            <person name="Hansen N.F."/>
            <person name="Hayashizaki Y."/>
            <person name="Johnson-Hopson C."/>
            <person name="Hsuan V.W."/>
            <person name="Iida K."/>
            <person name="Karnes M."/>
            <person name="Khan S."/>
            <person name="Koesema E."/>
            <person name="Ishida J."/>
            <person name="Jiang P.X."/>
            <person name="Jones T."/>
            <person name="Kawai J."/>
            <person name="Kamiya A."/>
            <person name="Meyers C."/>
            <person name="Nakajima M."/>
            <person name="Narusaka M."/>
            <person name="Seki M."/>
            <person name="Sakurai T."/>
            <person name="Satou M."/>
            <person name="Tamse R."/>
            <person name="Vaysberg M."/>
            <person name="Wallender E.K."/>
            <person name="Wong C."/>
            <person name="Yamamura Y."/>
            <person name="Yuan S."/>
            <person name="Shinozaki K."/>
            <person name="Davis R.W."/>
            <person name="Theologis A."/>
            <person name="Ecker J.R."/>
        </authorList>
    </citation>
    <scope>NUCLEOTIDE SEQUENCE [LARGE SCALE MRNA]</scope>
    <source>
        <strain>cv. Columbia</strain>
    </source>
</reference>
<proteinExistence type="evidence at transcript level"/>
<comment type="function">
    <text evidence="1">Catalyzes the conversion of Delta(8)-sterols to their corresponding Delta(7)-isomers.</text>
</comment>
<comment type="catalytic activity">
    <reaction>
        <text>lathosterol = 5alpha-cholest-8-en-3beta-ol</text>
        <dbReference type="Rhea" id="RHEA:15281"/>
        <dbReference type="ChEBI" id="CHEBI:16608"/>
        <dbReference type="ChEBI" id="CHEBI:17168"/>
        <dbReference type="EC" id="5.3.3.5"/>
    </reaction>
</comment>
<comment type="pathway">
    <text>Steroid biosynthesis; sterol biosynthesis.</text>
</comment>
<comment type="subcellular location">
    <subcellularLocation>
        <location evidence="1">Endoplasmic reticulum membrane</location>
        <topology evidence="1">Multi-pass membrane protein</topology>
    </subcellularLocation>
</comment>
<comment type="similarity">
    <text evidence="4">Belongs to the EBP family.</text>
</comment>
<protein>
    <recommendedName>
        <fullName>Probable 3-beta-hydroxysteroid-Delta(8),Delta(7)-isomerase</fullName>
        <ecNumber>5.3.3.5</ecNumber>
    </recommendedName>
    <alternativeName>
        <fullName>Cholestenol Delta-isomerase</fullName>
    </alternativeName>
    <alternativeName>
        <fullName>Delta(8)-Delta(7) sterol isomerase</fullName>
        <shortName>D8-D7 sterol isomerase</shortName>
    </alternativeName>
</protein>
<name>EBP_ARATH</name>
<organism>
    <name type="scientific">Arabidopsis thaliana</name>
    <name type="common">Mouse-ear cress</name>
    <dbReference type="NCBI Taxonomy" id="3702"/>
    <lineage>
        <taxon>Eukaryota</taxon>
        <taxon>Viridiplantae</taxon>
        <taxon>Streptophyta</taxon>
        <taxon>Embryophyta</taxon>
        <taxon>Tracheophyta</taxon>
        <taxon>Spermatophyta</taxon>
        <taxon>Magnoliopsida</taxon>
        <taxon>eudicotyledons</taxon>
        <taxon>Gunneridae</taxon>
        <taxon>Pentapetalae</taxon>
        <taxon>rosids</taxon>
        <taxon>malvids</taxon>
        <taxon>Brassicales</taxon>
        <taxon>Brassicaceae</taxon>
        <taxon>Camelineae</taxon>
        <taxon>Arabidopsis</taxon>
    </lineage>
</organism>